<evidence type="ECO:0000255" key="1">
    <source>
        <dbReference type="HAMAP-Rule" id="MF_00127"/>
    </source>
</evidence>
<gene>
    <name evidence="1" type="primary">hisS</name>
    <name type="ordered locus">GOX0033</name>
</gene>
<keyword id="KW-0030">Aminoacyl-tRNA synthetase</keyword>
<keyword id="KW-0067">ATP-binding</keyword>
<keyword id="KW-0963">Cytoplasm</keyword>
<keyword id="KW-0436">Ligase</keyword>
<keyword id="KW-0547">Nucleotide-binding</keyword>
<keyword id="KW-0648">Protein biosynthesis</keyword>
<keyword id="KW-1185">Reference proteome</keyword>
<comment type="catalytic activity">
    <reaction evidence="1">
        <text>tRNA(His) + L-histidine + ATP = L-histidyl-tRNA(His) + AMP + diphosphate + H(+)</text>
        <dbReference type="Rhea" id="RHEA:17313"/>
        <dbReference type="Rhea" id="RHEA-COMP:9665"/>
        <dbReference type="Rhea" id="RHEA-COMP:9689"/>
        <dbReference type="ChEBI" id="CHEBI:15378"/>
        <dbReference type="ChEBI" id="CHEBI:30616"/>
        <dbReference type="ChEBI" id="CHEBI:33019"/>
        <dbReference type="ChEBI" id="CHEBI:57595"/>
        <dbReference type="ChEBI" id="CHEBI:78442"/>
        <dbReference type="ChEBI" id="CHEBI:78527"/>
        <dbReference type="ChEBI" id="CHEBI:456215"/>
        <dbReference type="EC" id="6.1.1.21"/>
    </reaction>
</comment>
<comment type="subunit">
    <text evidence="1">Homodimer.</text>
</comment>
<comment type="subcellular location">
    <subcellularLocation>
        <location evidence="1">Cytoplasm</location>
    </subcellularLocation>
</comment>
<comment type="similarity">
    <text evidence="1">Belongs to the class-II aminoacyl-tRNA synthetase family.</text>
</comment>
<reference key="1">
    <citation type="journal article" date="2005" name="Nat. Biotechnol.">
        <title>Complete genome sequence of the acetic acid bacterium Gluconobacter oxydans.</title>
        <authorList>
            <person name="Prust C."/>
            <person name="Hoffmeister M."/>
            <person name="Liesegang H."/>
            <person name="Wiezer A."/>
            <person name="Fricke W.F."/>
            <person name="Ehrenreich A."/>
            <person name="Gottschalk G."/>
            <person name="Deppenmeier U."/>
        </authorList>
    </citation>
    <scope>NUCLEOTIDE SEQUENCE [LARGE SCALE GENOMIC DNA]</scope>
    <source>
        <strain>621H</strain>
    </source>
</reference>
<name>SYH_GLUOX</name>
<dbReference type="EC" id="6.1.1.21" evidence="1"/>
<dbReference type="EMBL" id="CP000009">
    <property type="protein sequence ID" value="AAW59831.1"/>
    <property type="molecule type" value="Genomic_DNA"/>
</dbReference>
<dbReference type="RefSeq" id="WP_011251635.1">
    <property type="nucleotide sequence ID" value="NC_006677.1"/>
</dbReference>
<dbReference type="SMR" id="Q5FUR8"/>
<dbReference type="STRING" id="290633.GOX0033"/>
<dbReference type="KEGG" id="gox:GOX0033"/>
<dbReference type="eggNOG" id="COG0124">
    <property type="taxonomic scope" value="Bacteria"/>
</dbReference>
<dbReference type="HOGENOM" id="CLU_025113_1_0_5"/>
<dbReference type="Proteomes" id="UP000006375">
    <property type="component" value="Chromosome"/>
</dbReference>
<dbReference type="GO" id="GO:0005737">
    <property type="term" value="C:cytoplasm"/>
    <property type="evidence" value="ECO:0007669"/>
    <property type="project" value="UniProtKB-SubCell"/>
</dbReference>
<dbReference type="GO" id="GO:0005524">
    <property type="term" value="F:ATP binding"/>
    <property type="evidence" value="ECO:0007669"/>
    <property type="project" value="UniProtKB-UniRule"/>
</dbReference>
<dbReference type="GO" id="GO:0004821">
    <property type="term" value="F:histidine-tRNA ligase activity"/>
    <property type="evidence" value="ECO:0007669"/>
    <property type="project" value="UniProtKB-UniRule"/>
</dbReference>
<dbReference type="GO" id="GO:0006427">
    <property type="term" value="P:histidyl-tRNA aminoacylation"/>
    <property type="evidence" value="ECO:0007669"/>
    <property type="project" value="UniProtKB-UniRule"/>
</dbReference>
<dbReference type="CDD" id="cd00773">
    <property type="entry name" value="HisRS-like_core"/>
    <property type="match status" value="1"/>
</dbReference>
<dbReference type="CDD" id="cd00859">
    <property type="entry name" value="HisRS_anticodon"/>
    <property type="match status" value="1"/>
</dbReference>
<dbReference type="Gene3D" id="3.40.50.800">
    <property type="entry name" value="Anticodon-binding domain"/>
    <property type="match status" value="1"/>
</dbReference>
<dbReference type="Gene3D" id="3.30.930.10">
    <property type="entry name" value="Bira Bifunctional Protein, Domain 2"/>
    <property type="match status" value="1"/>
</dbReference>
<dbReference type="HAMAP" id="MF_00127">
    <property type="entry name" value="His_tRNA_synth"/>
    <property type="match status" value="1"/>
</dbReference>
<dbReference type="InterPro" id="IPR006195">
    <property type="entry name" value="aa-tRNA-synth_II"/>
</dbReference>
<dbReference type="InterPro" id="IPR045864">
    <property type="entry name" value="aa-tRNA-synth_II/BPL/LPL"/>
</dbReference>
<dbReference type="InterPro" id="IPR004154">
    <property type="entry name" value="Anticodon-bd"/>
</dbReference>
<dbReference type="InterPro" id="IPR036621">
    <property type="entry name" value="Anticodon-bd_dom_sf"/>
</dbReference>
<dbReference type="InterPro" id="IPR015807">
    <property type="entry name" value="His-tRNA-ligase"/>
</dbReference>
<dbReference type="InterPro" id="IPR041715">
    <property type="entry name" value="HisRS-like_core"/>
</dbReference>
<dbReference type="InterPro" id="IPR004516">
    <property type="entry name" value="HisRS/HisZ"/>
</dbReference>
<dbReference type="InterPro" id="IPR033656">
    <property type="entry name" value="HisRS_anticodon"/>
</dbReference>
<dbReference type="NCBIfam" id="TIGR00442">
    <property type="entry name" value="hisS"/>
    <property type="match status" value="1"/>
</dbReference>
<dbReference type="PANTHER" id="PTHR43707:SF1">
    <property type="entry name" value="HISTIDINE--TRNA LIGASE, MITOCHONDRIAL-RELATED"/>
    <property type="match status" value="1"/>
</dbReference>
<dbReference type="PANTHER" id="PTHR43707">
    <property type="entry name" value="HISTIDYL-TRNA SYNTHETASE"/>
    <property type="match status" value="1"/>
</dbReference>
<dbReference type="Pfam" id="PF03129">
    <property type="entry name" value="HGTP_anticodon"/>
    <property type="match status" value="1"/>
</dbReference>
<dbReference type="Pfam" id="PF13393">
    <property type="entry name" value="tRNA-synt_His"/>
    <property type="match status" value="1"/>
</dbReference>
<dbReference type="PIRSF" id="PIRSF001549">
    <property type="entry name" value="His-tRNA_synth"/>
    <property type="match status" value="1"/>
</dbReference>
<dbReference type="SUPFAM" id="SSF52954">
    <property type="entry name" value="Class II aaRS ABD-related"/>
    <property type="match status" value="1"/>
</dbReference>
<dbReference type="SUPFAM" id="SSF55681">
    <property type="entry name" value="Class II aaRS and biotin synthetases"/>
    <property type="match status" value="1"/>
</dbReference>
<dbReference type="PROSITE" id="PS50862">
    <property type="entry name" value="AA_TRNA_LIGASE_II"/>
    <property type="match status" value="1"/>
</dbReference>
<protein>
    <recommendedName>
        <fullName evidence="1">Histidine--tRNA ligase</fullName>
        <ecNumber evidence="1">6.1.1.21</ecNumber>
    </recommendedName>
    <alternativeName>
        <fullName evidence="1">Histidyl-tRNA synthetase</fullName>
        <shortName evidence="1">HisRS</shortName>
    </alternativeName>
</protein>
<feature type="chain" id="PRO_0000136169" description="Histidine--tRNA ligase">
    <location>
        <begin position="1"/>
        <end position="415"/>
    </location>
</feature>
<sequence length="415" mass="45985">MSGLQPPRGTHDLIGETMRRHHHVVETARRVLRTYGFEEWSTPIFEDTRVFSRTLGETSDVVSKEMYTFEDRGGESITLRPEGTAAICRALVTNGLTQSLPQKVFYHGSMFRYERPQKGRYRQFHQIGAELIGAESPLRDAETIAMAQDILRELGLGDHVTLELNTLGDLASRQAWREALVAYFRDHADALSEESRVRLEANPLRILDSKSEQDRKLLDAAPAFADYLNDDSRQFWDGLRSSLQAFGVDFVENPRIVRGLDYYSHTAFEFVTSKLGAQGTVLAGGRYEGLVEQMGGPAIPAIGWAGGIERLAMLLDSVPELPAGIALVPMGDEAVLKAASIARVLRSAGLRAEIETRGNMKKRMERVVKSGASHAIVLGDEEIAKNIVQLRDLSSREQQEVPVADLARILSAGRA</sequence>
<proteinExistence type="inferred from homology"/>
<organism>
    <name type="scientific">Gluconobacter oxydans (strain 621H)</name>
    <name type="common">Gluconobacter suboxydans</name>
    <dbReference type="NCBI Taxonomy" id="290633"/>
    <lineage>
        <taxon>Bacteria</taxon>
        <taxon>Pseudomonadati</taxon>
        <taxon>Pseudomonadota</taxon>
        <taxon>Alphaproteobacteria</taxon>
        <taxon>Acetobacterales</taxon>
        <taxon>Acetobacteraceae</taxon>
        <taxon>Gluconobacter</taxon>
    </lineage>
</organism>
<accession>Q5FUR8</accession>